<name>TCMG_STRGA</name>
<protein>
    <recommendedName>
        <fullName evidence="8">Tetracenomycin A2 monooxygenase-dioxygenase</fullName>
        <ecNumber evidence="2 4">1.14.13.200</ecNumber>
    </recommendedName>
    <alternativeName>
        <fullName evidence="6">Tetracenomycin A2 oxygenase</fullName>
        <shortName evidence="6">Tcm A2 oxygenase</shortName>
    </alternativeName>
    <alternativeName>
        <fullName evidence="8">Tetracenomycin polyketide synthesis hydroxylase TcmG</fullName>
    </alternativeName>
</protein>
<feature type="initiator methionine" description="Removed" evidence="4">
    <location>
        <position position="1"/>
    </location>
</feature>
<feature type="chain" id="PRO_0000214048" description="Tetracenomycin A2 monooxygenase-dioxygenase">
    <location>
        <begin position="2"/>
        <end position="561"/>
    </location>
</feature>
<feature type="active site" description="Proton acceptor" evidence="1">
    <location>
        <position position="231"/>
    </location>
</feature>
<feature type="binding site" evidence="1">
    <location>
        <position position="15"/>
    </location>
    <ligand>
        <name>FAD</name>
        <dbReference type="ChEBI" id="CHEBI:57692"/>
    </ligand>
</feature>
<feature type="binding site" evidence="1">
    <location>
        <position position="35"/>
    </location>
    <ligand>
        <name>FAD</name>
        <dbReference type="ChEBI" id="CHEBI:57692"/>
    </ligand>
</feature>
<feature type="binding site" evidence="1">
    <location>
        <position position="128"/>
    </location>
    <ligand>
        <name>FAD</name>
        <dbReference type="ChEBI" id="CHEBI:57692"/>
    </ligand>
</feature>
<feature type="binding site" evidence="1">
    <location>
        <position position="152"/>
    </location>
    <ligand>
        <name>FAD</name>
        <dbReference type="ChEBI" id="CHEBI:57692"/>
    </ligand>
</feature>
<feature type="binding site" evidence="1">
    <location>
        <position position="322"/>
    </location>
    <ligand>
        <name>FAD</name>
        <dbReference type="ChEBI" id="CHEBI:57692"/>
    </ligand>
</feature>
<sequence length="561" mass="60560">MSTEEVPVLIVGGGLTGLSAALFLSQHGVSCRLVEKHRGTTVLTRASGISSRTMELLRGVGLERTVIERGPKLVEGARWRELGQPADQIPWVVIRANGLHDLENAVTVEEPSLDVGHLSPTRPYWCGQDRLEPILRDEAVRRGARIDFNTRMEAFTADESGVTATIVDQATGEQSTVRARYLIAADGVRSPVRETLGITRTGHGTIGNAMSVLFKADLRDTVKGRRFVICYLPNPDEPGVLQLPEVPAVLQLFDEDRWIFGFFFDPRETSPEQFTDERCAQIIRTATGLPGLPVEVQMARPWEMSHNSARSYRSGRVFLAGDAAHVHPPAGAFGANGGIQDAHNLAWKLAAVLKGTAGDALLDTYEQERLPIGAAVADQAWIRHTWRLNDSEELRRALRESTLVATGYRYTSDAVLGAAYPEPIPAAHDLTGRPGYRVPHVWLGRGGERVSTVDLGGDAFVVLAGPDGGEWQAAADKVAQDLGVPVHCHPVGGDGQLTDPDGAFLGTTGLTRNGALLIRPDGFVAWRAEYLPEDAAGELRSALERILARTSGTPGGTALEG</sequence>
<organism>
    <name type="scientific">Streptomyces glaucescens</name>
    <dbReference type="NCBI Taxonomy" id="1907"/>
    <lineage>
        <taxon>Bacteria</taxon>
        <taxon>Bacillati</taxon>
        <taxon>Actinomycetota</taxon>
        <taxon>Actinomycetes</taxon>
        <taxon>Kitasatosporales</taxon>
        <taxon>Streptomycetaceae</taxon>
        <taxon>Streptomyces</taxon>
    </lineage>
</organism>
<gene>
    <name evidence="7" type="primary">tcmG</name>
</gene>
<comment type="function">
    <text evidence="2 4 5">Involved in the biosynthesis of tetracenomycin C (TCM C) (PubMed:11009387, PubMed:7982994, PubMed:8509339). Catalyzes the triple hydroxylation of tetracenomycin A2 (TCM A2) at positions C-4, C-4a and C-12a to give tetracenomycin C (TCM C) (PubMed:11009387, PubMed:7982994, PubMed:8509339). Can use either NADH or NADPH as electron donors, but prefers NADPH under physiological conditions (PubMed:7982994).</text>
</comment>
<comment type="catalytic activity">
    <reaction evidence="2 4">
        <text>tetracenomycin A2 + 2 NADPH + 2 O2 + 2 H(+) = tetracenomycin C + 2 NADP(+) + H2O</text>
        <dbReference type="Rhea" id="RHEA:42820"/>
        <dbReference type="ChEBI" id="CHEBI:9470"/>
        <dbReference type="ChEBI" id="CHEBI:15377"/>
        <dbReference type="ChEBI" id="CHEBI:15378"/>
        <dbReference type="ChEBI" id="CHEBI:15379"/>
        <dbReference type="ChEBI" id="CHEBI:32197"/>
        <dbReference type="ChEBI" id="CHEBI:57783"/>
        <dbReference type="ChEBI" id="CHEBI:58349"/>
        <dbReference type="EC" id="1.14.13.200"/>
    </reaction>
    <physiologicalReaction direction="left-to-right" evidence="2 4">
        <dbReference type="Rhea" id="RHEA:42821"/>
    </physiologicalReaction>
</comment>
<comment type="cofactor">
    <cofactor evidence="4">
        <name>FAD</name>
        <dbReference type="ChEBI" id="CHEBI:57692"/>
    </cofactor>
</comment>
<comment type="biophysicochemical properties">
    <kinetics>
        <KM evidence="4">1.81 uM for tetracenomycin A2</KM>
        <KM evidence="4">260 uM for NADH</KM>
        <KM evidence="4">82.1 uM for NADPH</KM>
        <Vmax evidence="4">14.7 nmol/min/mg enzyme</Vmax>
    </kinetics>
    <phDependence>
        <text evidence="4">Optimum pH is 9.0-9.5.</text>
    </phDependence>
</comment>
<comment type="pathway">
    <text evidence="4">Antibiotic biosynthesis; tetracenomycin C biosynthesis.</text>
</comment>
<comment type="subunit">
    <text evidence="3 4">Monomer (PubMed:7982994). May form oligomers up to homohexamers (PubMed:11092935).</text>
</comment>
<comment type="similarity">
    <text evidence="8">Belongs to the PheA/TfdB FAD monooxygenase family.</text>
</comment>
<keyword id="KW-0045">Antibiotic biosynthesis</keyword>
<keyword id="KW-0223">Dioxygenase</keyword>
<keyword id="KW-0903">Direct protein sequencing</keyword>
<keyword id="KW-0274">FAD</keyword>
<keyword id="KW-0285">Flavoprotein</keyword>
<keyword id="KW-0503">Monooxygenase</keyword>
<keyword id="KW-0560">Oxidoreductase</keyword>
<dbReference type="EC" id="1.14.13.200" evidence="2 4"/>
<dbReference type="EMBL" id="M80674">
    <property type="protein sequence ID" value="AAA67511.1"/>
    <property type="molecule type" value="Genomic_DNA"/>
</dbReference>
<dbReference type="PIR" id="A47127">
    <property type="entry name" value="A47127"/>
</dbReference>
<dbReference type="PIR" id="A55149">
    <property type="entry name" value="A55149"/>
</dbReference>
<dbReference type="SMR" id="P39888"/>
<dbReference type="STRING" id="1907.SGLAU_26335"/>
<dbReference type="eggNOG" id="COG0654">
    <property type="taxonomic scope" value="Bacteria"/>
</dbReference>
<dbReference type="BioCyc" id="MetaCyc:MONOMER-18607"/>
<dbReference type="BRENDA" id="1.14.13.200">
    <property type="organism ID" value="6020"/>
</dbReference>
<dbReference type="UniPathway" id="UPA00174"/>
<dbReference type="GO" id="GO:0051213">
    <property type="term" value="F:dioxygenase activity"/>
    <property type="evidence" value="ECO:0007669"/>
    <property type="project" value="UniProtKB-KW"/>
</dbReference>
<dbReference type="GO" id="GO:0071949">
    <property type="term" value="F:FAD binding"/>
    <property type="evidence" value="ECO:0007669"/>
    <property type="project" value="InterPro"/>
</dbReference>
<dbReference type="GO" id="GO:0016709">
    <property type="term" value="F:oxidoreductase activity, acting on paired donors, with incorporation or reduction of molecular oxygen, NAD(P)H as one donor, and incorporation of one atom of oxygen"/>
    <property type="evidence" value="ECO:0007669"/>
    <property type="project" value="UniProtKB-ARBA"/>
</dbReference>
<dbReference type="GO" id="GO:0017000">
    <property type="term" value="P:antibiotic biosynthetic process"/>
    <property type="evidence" value="ECO:0007669"/>
    <property type="project" value="UniProtKB-KW"/>
</dbReference>
<dbReference type="Gene3D" id="3.40.30.120">
    <property type="match status" value="1"/>
</dbReference>
<dbReference type="Gene3D" id="3.30.9.10">
    <property type="entry name" value="D-Amino Acid Oxidase, subunit A, domain 2"/>
    <property type="match status" value="1"/>
</dbReference>
<dbReference type="Gene3D" id="3.50.50.60">
    <property type="entry name" value="FAD/NAD(P)-binding domain"/>
    <property type="match status" value="1"/>
</dbReference>
<dbReference type="InterPro" id="IPR002938">
    <property type="entry name" value="FAD-bd"/>
</dbReference>
<dbReference type="InterPro" id="IPR036188">
    <property type="entry name" value="FAD/NAD-bd_sf"/>
</dbReference>
<dbReference type="InterPro" id="IPR050641">
    <property type="entry name" value="RIFMO-like"/>
</dbReference>
<dbReference type="PANTHER" id="PTHR43004:SF19">
    <property type="entry name" value="BINDING MONOOXYGENASE, PUTATIVE (JCVI)-RELATED"/>
    <property type="match status" value="1"/>
</dbReference>
<dbReference type="PANTHER" id="PTHR43004">
    <property type="entry name" value="TRK SYSTEM POTASSIUM UPTAKE PROTEIN"/>
    <property type="match status" value="1"/>
</dbReference>
<dbReference type="Pfam" id="PF01494">
    <property type="entry name" value="FAD_binding_3"/>
    <property type="match status" value="1"/>
</dbReference>
<dbReference type="Pfam" id="PF21274">
    <property type="entry name" value="Rng_hyd_C"/>
    <property type="match status" value="1"/>
</dbReference>
<dbReference type="PRINTS" id="PR00420">
    <property type="entry name" value="RNGMNOXGNASE"/>
</dbReference>
<dbReference type="SUPFAM" id="SSF51905">
    <property type="entry name" value="FAD/NAD(P)-binding domain"/>
    <property type="match status" value="1"/>
</dbReference>
<evidence type="ECO:0000250" key="1">
    <source>
        <dbReference type="UniProtKB" id="Q54530"/>
    </source>
</evidence>
<evidence type="ECO:0000269" key="2">
    <source>
    </source>
</evidence>
<evidence type="ECO:0000269" key="3">
    <source>
    </source>
</evidence>
<evidence type="ECO:0000269" key="4">
    <source>
    </source>
</evidence>
<evidence type="ECO:0000269" key="5">
    <source>
    </source>
</evidence>
<evidence type="ECO:0000303" key="6">
    <source>
    </source>
</evidence>
<evidence type="ECO:0000303" key="7">
    <source>
    </source>
</evidence>
<evidence type="ECO:0000305" key="8"/>
<accession>P39888</accession>
<accession>Q7M0K6</accession>
<reference key="1">
    <citation type="journal article" date="1993" name="J. Bacteriol.">
        <title>Nucleotide sequences and heterologous expression of tcmG and tcmP, biosynthetic genes for tetracenomycin C in Streptomyces glaucescens.</title>
        <authorList>
            <person name="Decker H."/>
            <person name="Motamedi H."/>
            <person name="Hutchinson C.R."/>
        </authorList>
    </citation>
    <scope>NUCLEOTIDE SEQUENCE [GENOMIC DNA]</scope>
    <scope>FUNCTION</scope>
    <source>
        <strain>DSM 40716 / ETH 22794 / Tue 49</strain>
    </source>
</reference>
<reference key="2">
    <citation type="journal article" date="1994" name="J. Biol. Chem.">
        <title>Triple hydroxylation of tetracenomycin A2 to tetracenomycin C in Streptomyces glaucescens. Overexpression of the tcmG gene in Streptomyces lividans and characterization of the tetracenomycin A2 oxygenase.</title>
        <authorList>
            <person name="Shen B."/>
            <person name="Hutchinson C.R."/>
        </authorList>
    </citation>
    <scope>SEQUENCE REVISION TO N-TERMINUS</scope>
    <scope>PROTEIN SEQUENCE OF 2-11</scope>
    <scope>FUNCTION</scope>
    <scope>CATALYTIC ACTIVITY</scope>
    <scope>COFACTOR</scope>
    <scope>BIOPHYSICOCHEMICAL PROPERTIES</scope>
    <scope>PATHWAY</scope>
    <scope>SUBUNIT</scope>
</reference>
<reference key="3">
    <citation type="journal article" date="2000" name="Org. Lett.">
        <title>Triple hydroxylation of tetracenomycin A2 to tetracenomycin C involving two molecules of O(2) and one molecule of H(2)O.</title>
        <authorList>
            <person name="Rafanan E.R. Jr."/>
            <person name="Hutchinson C.R."/>
            <person name="Shen B."/>
        </authorList>
    </citation>
    <scope>FUNCTION AS A MONOOXYGENASE-DIOXYGENASE</scope>
    <scope>CATALYTIC ACTIVITY</scope>
</reference>
<reference key="4">
    <citation type="journal article" date="2000" name="Acta Crystallogr. D">
        <title>Crystallization and preliminary X-ray analysis of tetracenomycin A2 oxygenase: a flavoprotein hydroxylase involved in polyketide biosynthesis.</title>
        <authorList>
            <person name="Beynon J."/>
            <person name="Rafanan E.R. Jr."/>
            <person name="Shen B."/>
            <person name="Fisher A.J."/>
        </authorList>
    </citation>
    <scope>CRYSTALLIZATION</scope>
    <scope>SUBUNIT</scope>
</reference>
<proteinExistence type="evidence at protein level"/>